<reference key="1">
    <citation type="journal article" date="2002" name="Nature">
        <title>The genome sequence of Schizosaccharomyces pombe.</title>
        <authorList>
            <person name="Wood V."/>
            <person name="Gwilliam R."/>
            <person name="Rajandream M.A."/>
            <person name="Lyne M.H."/>
            <person name="Lyne R."/>
            <person name="Stewart A."/>
            <person name="Sgouros J.G."/>
            <person name="Peat N."/>
            <person name="Hayles J."/>
            <person name="Baker S.G."/>
            <person name="Basham D."/>
            <person name="Bowman S."/>
            <person name="Brooks K."/>
            <person name="Brown D."/>
            <person name="Brown S."/>
            <person name="Chillingworth T."/>
            <person name="Churcher C.M."/>
            <person name="Collins M."/>
            <person name="Connor R."/>
            <person name="Cronin A."/>
            <person name="Davis P."/>
            <person name="Feltwell T."/>
            <person name="Fraser A."/>
            <person name="Gentles S."/>
            <person name="Goble A."/>
            <person name="Hamlin N."/>
            <person name="Harris D.E."/>
            <person name="Hidalgo J."/>
            <person name="Hodgson G."/>
            <person name="Holroyd S."/>
            <person name="Hornsby T."/>
            <person name="Howarth S."/>
            <person name="Huckle E.J."/>
            <person name="Hunt S."/>
            <person name="Jagels K."/>
            <person name="James K.D."/>
            <person name="Jones L."/>
            <person name="Jones M."/>
            <person name="Leather S."/>
            <person name="McDonald S."/>
            <person name="McLean J."/>
            <person name="Mooney P."/>
            <person name="Moule S."/>
            <person name="Mungall K.L."/>
            <person name="Murphy L.D."/>
            <person name="Niblett D."/>
            <person name="Odell C."/>
            <person name="Oliver K."/>
            <person name="O'Neil S."/>
            <person name="Pearson D."/>
            <person name="Quail M.A."/>
            <person name="Rabbinowitsch E."/>
            <person name="Rutherford K.M."/>
            <person name="Rutter S."/>
            <person name="Saunders D."/>
            <person name="Seeger K."/>
            <person name="Sharp S."/>
            <person name="Skelton J."/>
            <person name="Simmonds M.N."/>
            <person name="Squares R."/>
            <person name="Squares S."/>
            <person name="Stevens K."/>
            <person name="Taylor K."/>
            <person name="Taylor R.G."/>
            <person name="Tivey A."/>
            <person name="Walsh S.V."/>
            <person name="Warren T."/>
            <person name="Whitehead S."/>
            <person name="Woodward J.R."/>
            <person name="Volckaert G."/>
            <person name="Aert R."/>
            <person name="Robben J."/>
            <person name="Grymonprez B."/>
            <person name="Weltjens I."/>
            <person name="Vanstreels E."/>
            <person name="Rieger M."/>
            <person name="Schaefer M."/>
            <person name="Mueller-Auer S."/>
            <person name="Gabel C."/>
            <person name="Fuchs M."/>
            <person name="Duesterhoeft A."/>
            <person name="Fritzc C."/>
            <person name="Holzer E."/>
            <person name="Moestl D."/>
            <person name="Hilbert H."/>
            <person name="Borzym K."/>
            <person name="Langer I."/>
            <person name="Beck A."/>
            <person name="Lehrach H."/>
            <person name="Reinhardt R."/>
            <person name="Pohl T.M."/>
            <person name="Eger P."/>
            <person name="Zimmermann W."/>
            <person name="Wedler H."/>
            <person name="Wambutt R."/>
            <person name="Purnelle B."/>
            <person name="Goffeau A."/>
            <person name="Cadieu E."/>
            <person name="Dreano S."/>
            <person name="Gloux S."/>
            <person name="Lelaure V."/>
            <person name="Mottier S."/>
            <person name="Galibert F."/>
            <person name="Aves S.J."/>
            <person name="Xiang Z."/>
            <person name="Hunt C."/>
            <person name="Moore K."/>
            <person name="Hurst S.M."/>
            <person name="Lucas M."/>
            <person name="Rochet M."/>
            <person name="Gaillardin C."/>
            <person name="Tallada V.A."/>
            <person name="Garzon A."/>
            <person name="Thode G."/>
            <person name="Daga R.R."/>
            <person name="Cruzado L."/>
            <person name="Jimenez J."/>
            <person name="Sanchez M."/>
            <person name="del Rey F."/>
            <person name="Benito J."/>
            <person name="Dominguez A."/>
            <person name="Revuelta J.L."/>
            <person name="Moreno S."/>
            <person name="Armstrong J."/>
            <person name="Forsburg S.L."/>
            <person name="Cerutti L."/>
            <person name="Lowe T."/>
            <person name="McCombie W.R."/>
            <person name="Paulsen I."/>
            <person name="Potashkin J."/>
            <person name="Shpakovski G.V."/>
            <person name="Ussery D."/>
            <person name="Barrell B.G."/>
            <person name="Nurse P."/>
        </authorList>
    </citation>
    <scope>NUCLEOTIDE SEQUENCE [LARGE SCALE GENOMIC DNA]</scope>
    <source>
        <strain>972 / ATCC 24843</strain>
    </source>
</reference>
<reference key="2">
    <citation type="journal article" date="2011" name="Science">
        <title>Comparative functional genomics of the fission yeasts.</title>
        <authorList>
            <person name="Rhind N."/>
            <person name="Chen Z."/>
            <person name="Yassour M."/>
            <person name="Thompson D.A."/>
            <person name="Haas B.J."/>
            <person name="Habib N."/>
            <person name="Wapinski I."/>
            <person name="Roy S."/>
            <person name="Lin M.F."/>
            <person name="Heiman D.I."/>
            <person name="Young S.K."/>
            <person name="Furuya K."/>
            <person name="Guo Y."/>
            <person name="Pidoux A."/>
            <person name="Chen H.M."/>
            <person name="Robbertse B."/>
            <person name="Goldberg J.M."/>
            <person name="Aoki K."/>
            <person name="Bayne E.H."/>
            <person name="Berlin A.M."/>
            <person name="Desjardins C.A."/>
            <person name="Dobbs E."/>
            <person name="Dukaj L."/>
            <person name="Fan L."/>
            <person name="FitzGerald M.G."/>
            <person name="French C."/>
            <person name="Gujja S."/>
            <person name="Hansen K."/>
            <person name="Keifenheim D."/>
            <person name="Levin J.Z."/>
            <person name="Mosher R.A."/>
            <person name="Mueller C.A."/>
            <person name="Pfiffner J."/>
            <person name="Priest M."/>
            <person name="Russ C."/>
            <person name="Smialowska A."/>
            <person name="Swoboda P."/>
            <person name="Sykes S.M."/>
            <person name="Vaughn M."/>
            <person name="Vengrova S."/>
            <person name="Yoder R."/>
            <person name="Zeng Q."/>
            <person name="Allshire R."/>
            <person name="Baulcombe D."/>
            <person name="Birren B.W."/>
            <person name="Brown W."/>
            <person name="Ekwall K."/>
            <person name="Kellis M."/>
            <person name="Leatherwood J."/>
            <person name="Levin H."/>
            <person name="Margalit H."/>
            <person name="Martienssen R."/>
            <person name="Nieduszynski C.A."/>
            <person name="Spatafora J.W."/>
            <person name="Friedman N."/>
            <person name="Dalgaard J.Z."/>
            <person name="Baumann P."/>
            <person name="Niki H."/>
            <person name="Regev A."/>
            <person name="Nusbaum C."/>
        </authorList>
    </citation>
    <scope>REVISION OF GENE MODEL</scope>
</reference>
<reference key="3">
    <citation type="journal article" date="2001" name="Cell">
        <title>Mus81-Eme1 are essential components of a Holliday junction resolvase.</title>
        <authorList>
            <person name="Boddy M.N."/>
            <person name="Gaillard P.-H.L."/>
            <person name="McDonald W.H."/>
            <person name="Shanahan P."/>
            <person name="Yates J.R. III"/>
            <person name="Russell P."/>
        </authorList>
    </citation>
    <scope>PROTEIN SEQUENCE OF 373-387; 431-453 AND 692-706</scope>
    <scope>FUNCTION</scope>
    <scope>COFACTOR</scope>
    <scope>INTERACTION WITH MUS81</scope>
    <scope>SUBCELLULAR LOCATION</scope>
</reference>
<reference key="4">
    <citation type="journal article" date="2002" name="J. Biol. Chem.">
        <title>Mus81-Eme1 and Rqh1 involvement in processing stalled and collapsed replication forks.</title>
        <authorList>
            <person name="Doe C.L."/>
            <person name="Ahn J.S."/>
            <person name="Dixon J."/>
            <person name="Whitby M.C."/>
        </authorList>
    </citation>
    <scope>FUNCTION</scope>
    <scope>INTERACTION WITH MUS81</scope>
</reference>
<reference key="5">
    <citation type="journal article" date="2003" name="Genetics">
        <title>Fission yeast Mus81.Eme1 Holliday junction resolvase is required for meiotic crossing over but not for gene conversion.</title>
        <authorList>
            <person name="Smith G.R."/>
            <person name="Boddy M.N."/>
            <person name="Shanahan P."/>
            <person name="Russell P."/>
        </authorList>
    </citation>
    <scope>FUNCTION</scope>
</reference>
<reference key="6">
    <citation type="journal article" date="2003" name="J. Biol. Chem.">
        <title>Cleavage of model replication forks by fission yeast Mus81-Eme1 and budding yeast Mus81-Mms4.</title>
        <authorList>
            <person name="Whitby M.C."/>
            <person name="Osman F."/>
            <person name="Dixon J."/>
        </authorList>
    </citation>
    <scope>FUNCTION</scope>
</reference>
<reference key="7">
    <citation type="journal article" date="2003" name="Mol. Cell">
        <title>The endogenous Mus81-Eme1 complex resolves Holliday junctions by a nick and counternick mechanism.</title>
        <authorList>
            <person name="Gaillard P.-H.L."/>
            <person name="Noguchi E."/>
            <person name="Shanahan P."/>
            <person name="Russell P."/>
        </authorList>
    </citation>
    <scope>FUNCTION</scope>
</reference>
<reference key="8">
    <citation type="journal article" date="2003" name="Mol. Cell">
        <title>Generating crossovers by resolution of nicked Holliday junctions: a role for Mus81-Eme1 in meiosis.</title>
        <authorList>
            <person name="Osman F."/>
            <person name="Dixon J."/>
            <person name="Doe C.L."/>
            <person name="Whitby M.C."/>
        </authorList>
    </citation>
    <scope>FUNCTION</scope>
</reference>
<reference key="9">
    <citation type="journal article" date="2004" name="Nucleic Acids Res.">
        <title>DNA repair by a Rad22-Mus81-dependent pathway that is independent of Rhp51.</title>
        <authorList>
            <person name="Doe C.L."/>
            <person name="Osman F."/>
            <person name="Dixon J."/>
            <person name="Whitby M.C."/>
        </authorList>
    </citation>
    <scope>FUNCTION</scope>
</reference>
<reference key="10">
    <citation type="journal article" date="2008" name="J. Proteome Res.">
        <title>Phosphoproteome analysis of fission yeast.</title>
        <authorList>
            <person name="Wilson-Grady J.T."/>
            <person name="Villen J."/>
            <person name="Gygi S.P."/>
        </authorList>
    </citation>
    <scope>PHOSPHORYLATION [LARGE SCALE ANALYSIS] AT THR-400</scope>
    <scope>IDENTIFICATION BY MASS SPECTROMETRY</scope>
</reference>
<keyword id="KW-0903">Direct protein sequencing</keyword>
<keyword id="KW-0227">DNA damage</keyword>
<keyword id="KW-0233">DNA recombination</keyword>
<keyword id="KW-0234">DNA repair</keyword>
<keyword id="KW-0255">Endonuclease</keyword>
<keyword id="KW-0378">Hydrolase</keyword>
<keyword id="KW-0460">Magnesium</keyword>
<keyword id="KW-0469">Meiosis</keyword>
<keyword id="KW-0479">Metal-binding</keyword>
<keyword id="KW-0540">Nuclease</keyword>
<keyword id="KW-0539">Nucleus</keyword>
<keyword id="KW-0597">Phosphoprotein</keyword>
<keyword id="KW-1185">Reference proteome</keyword>
<accession>Q9C103</accession>
<proteinExistence type="evidence at protein level"/>
<sequence>MTLQSTDSAIVIDSEADVDISSSQASPSKDNIALSEHNVITVLDTPQRSTQCDSLLKSFSTPLVSGSEDVLPSPRDALNITNKKSVTDNLLLSLTSSNQSTNTNLNPSSRVEIINLNSSPPNSLSSQPKHQEFHLFHTPTIPRTTQLSSKTSSPIVIPDDNEQVASPLSKKAASLTSSPLKDFQSSPPLSTVLQKSHSLHDILLDTNDDDHFPFTQSPLTKTKSFNDALTSSSSILKPCMPSIASPTSNRLSHAPSTPNLFPNQDSSNTIDLINNRSKTSVENQERTFNLTSDVHLDSPTSPSKHSSIEPNTSQEDSFQELPSLNKLSIQSRAFKKMRLPKISRTTDTPPASTSNSNKKNLDKLKKMRKLCSRSLEPYELDSNTQRKRKRYEDSLKKSKTLDKVDSLNRKMAKELDRKNSKELQKINKVKRTKEECLSEIILLSPDDWASSWYSTVRSQLDSYNCQFVVNSNQPKDSIMWKRKVNNVFNSSTNRFELSIEHEQIEPFALLRLKCRDFIKYIEEDQADTFFHEMSEKFKGCKLILLLEGIPNYFKSLKAELNRQYAAAVNSGTRPLLFGSLSKYQNFTKEKLESEIVRFSFEHSILINTSNDEKETAQWIVSFTGDIALSRYKHFSKFSARASTTEIGHVKSADRIENSLNFMLRQILRVTPNIANAICDQFDSIPSLIHHLKTHGEESLTNVVIQSSISERNLGPVLSRRIYNTFLCKEASSDAP</sequence>
<name>EME1_SCHPO</name>
<protein>
    <recommendedName>
        <fullName>Crossover junction endonuclease eme1</fullName>
        <ecNumber>3.1.21.10</ecNumber>
    </recommendedName>
    <alternativeName>
        <fullName>Essential meiotic endonuclease 1</fullName>
    </alternativeName>
</protein>
<gene>
    <name type="primary">eme1</name>
    <name type="synonym">mms4</name>
    <name type="synonym">slx2</name>
    <name type="ORF">SPAPB1E7.06c</name>
</gene>
<comment type="function">
    <text evidence="2 3 4 5 6 7 8">Interacts with mus81 to form a DNA structure-specific endonuclease with substrate preference for branched DNA structures with a 5'-end at the branch nick. Typical substrates include 3'-flap structures, D-loops, replication forks and nicked Holliday junctions. May be required in mitosis for the processing of stalled or collapsed replication fork intermediates. May be required in meiosis for the repair of meiosis-specific double strand breaks subsequent to single-end invasion (SEI).</text>
</comment>
<comment type="catalytic activity">
    <reaction>
        <text>Endonucleolytic cleavage at a junction such as a reciprocal single-stranded crossover between two homologous DNA duplexes (Holliday junction).</text>
        <dbReference type="EC" id="3.1.21.10"/>
    </reaction>
</comment>
<comment type="cofactor">
    <cofactor evidence="2">
        <name>Mg(2+)</name>
        <dbReference type="ChEBI" id="CHEBI:18420"/>
    </cofactor>
</comment>
<comment type="subunit">
    <text evidence="2 3">Interacts with mus81.</text>
</comment>
<comment type="subcellular location">
    <subcellularLocation>
        <location evidence="2">Nucleus</location>
    </subcellularLocation>
</comment>
<comment type="miscellaneous">
    <text>S.pombe appears to be critically dependent on the mus81-eme1 endonuclease for the resolution of meiotic crossovers. This may be due to the absence of an alternate pathway for crossover resolution such as the MSH4-MSH5 pathway which exists in S.cerevisiae and other eukaryotes.</text>
</comment>
<comment type="similarity">
    <text evidence="10">Belongs to the EME1/MMS4 family.</text>
</comment>
<feature type="chain" id="PRO_0000086966" description="Crossover junction endonuclease eme1">
    <location>
        <begin position="1"/>
        <end position="735"/>
    </location>
</feature>
<feature type="domain" description="ERCC4">
    <location>
        <begin position="467"/>
        <end position="691"/>
    </location>
</feature>
<feature type="region of interest" description="Disordered" evidence="1">
    <location>
        <begin position="245"/>
        <end position="268"/>
    </location>
</feature>
<feature type="region of interest" description="Disordered" evidence="1">
    <location>
        <begin position="289"/>
        <end position="363"/>
    </location>
</feature>
<feature type="region of interest" description="Disordered" evidence="1">
    <location>
        <begin position="375"/>
        <end position="397"/>
    </location>
</feature>
<feature type="compositionally biased region" description="Polar residues" evidence="1">
    <location>
        <begin position="289"/>
        <end position="331"/>
    </location>
</feature>
<feature type="modified residue" description="Phosphothreonine" evidence="9">
    <location>
        <position position="400"/>
    </location>
</feature>
<organism>
    <name type="scientific">Schizosaccharomyces pombe (strain 972 / ATCC 24843)</name>
    <name type="common">Fission yeast</name>
    <dbReference type="NCBI Taxonomy" id="284812"/>
    <lineage>
        <taxon>Eukaryota</taxon>
        <taxon>Fungi</taxon>
        <taxon>Dikarya</taxon>
        <taxon>Ascomycota</taxon>
        <taxon>Taphrinomycotina</taxon>
        <taxon>Schizosaccharomycetes</taxon>
        <taxon>Schizosaccharomycetales</taxon>
        <taxon>Schizosaccharomycetaceae</taxon>
        <taxon>Schizosaccharomyces</taxon>
    </lineage>
</organism>
<evidence type="ECO:0000256" key="1">
    <source>
        <dbReference type="SAM" id="MobiDB-lite"/>
    </source>
</evidence>
<evidence type="ECO:0000269" key="2">
    <source>
    </source>
</evidence>
<evidence type="ECO:0000269" key="3">
    <source>
    </source>
</evidence>
<evidence type="ECO:0000269" key="4">
    <source>
    </source>
</evidence>
<evidence type="ECO:0000269" key="5">
    <source>
    </source>
</evidence>
<evidence type="ECO:0000269" key="6">
    <source>
    </source>
</evidence>
<evidence type="ECO:0000269" key="7">
    <source>
    </source>
</evidence>
<evidence type="ECO:0000269" key="8">
    <source>
    </source>
</evidence>
<evidence type="ECO:0000269" key="9">
    <source>
    </source>
</evidence>
<evidence type="ECO:0000305" key="10"/>
<dbReference type="EC" id="3.1.21.10"/>
<dbReference type="EMBL" id="CU329670">
    <property type="protein sequence ID" value="CAC36923.2"/>
    <property type="molecule type" value="Genomic_DNA"/>
</dbReference>
<dbReference type="RefSeq" id="NP_594132.2">
    <property type="nucleotide sequence ID" value="NM_001019556.2"/>
</dbReference>
<dbReference type="SMR" id="Q9C103"/>
<dbReference type="BioGRID" id="280084">
    <property type="interactions" value="145"/>
</dbReference>
<dbReference type="FunCoup" id="Q9C103">
    <property type="interactions" value="20"/>
</dbReference>
<dbReference type="IntAct" id="Q9C103">
    <property type="interactions" value="1"/>
</dbReference>
<dbReference type="MINT" id="Q9C103"/>
<dbReference type="STRING" id="284812.Q9C103"/>
<dbReference type="iPTMnet" id="Q9C103"/>
<dbReference type="PaxDb" id="4896-SPAPB1E7.06c.1"/>
<dbReference type="EnsemblFungi" id="SPAPB1E7.06c.1">
    <property type="protein sequence ID" value="SPAPB1E7.06c.1:pep"/>
    <property type="gene ID" value="SPAPB1E7.06c"/>
</dbReference>
<dbReference type="GeneID" id="2543670"/>
<dbReference type="KEGG" id="spo:2543670"/>
<dbReference type="PomBase" id="SPAPB1E7.06c">
    <property type="gene designation" value="eme1"/>
</dbReference>
<dbReference type="VEuPathDB" id="FungiDB:SPAPB1E7.06c"/>
<dbReference type="eggNOG" id="ENOG502R8ER">
    <property type="taxonomic scope" value="Eukaryota"/>
</dbReference>
<dbReference type="HOGENOM" id="CLU_396979_0_0_1"/>
<dbReference type="InParanoid" id="Q9C103"/>
<dbReference type="OMA" id="AIFTQHI"/>
<dbReference type="Reactome" id="R-SPO-5693568">
    <property type="pathway name" value="Resolution of D-loop Structures through Holliday Junction Intermediates"/>
</dbReference>
<dbReference type="PRO" id="PR:Q9C103"/>
<dbReference type="Proteomes" id="UP000002485">
    <property type="component" value="Chromosome I"/>
</dbReference>
<dbReference type="GO" id="GO:0048476">
    <property type="term" value="C:Holliday junction resolvase complex"/>
    <property type="evidence" value="ECO:0000314"/>
    <property type="project" value="PomBase"/>
</dbReference>
<dbReference type="GO" id="GO:0005634">
    <property type="term" value="C:nucleus"/>
    <property type="evidence" value="ECO:0000305"/>
    <property type="project" value="PomBase"/>
</dbReference>
<dbReference type="GO" id="GO:0008821">
    <property type="term" value="F:crossover junction DNA endonuclease activity"/>
    <property type="evidence" value="ECO:0000314"/>
    <property type="project" value="PomBase"/>
</dbReference>
<dbReference type="GO" id="GO:0003677">
    <property type="term" value="F:DNA binding"/>
    <property type="evidence" value="ECO:0007669"/>
    <property type="project" value="InterPro"/>
</dbReference>
<dbReference type="GO" id="GO:0046872">
    <property type="term" value="F:metal ion binding"/>
    <property type="evidence" value="ECO:0007669"/>
    <property type="project" value="UniProtKB-KW"/>
</dbReference>
<dbReference type="GO" id="GO:0006302">
    <property type="term" value="P:double-strand break repair"/>
    <property type="evidence" value="ECO:0000315"/>
    <property type="project" value="PomBase"/>
</dbReference>
<dbReference type="GO" id="GO:0000709">
    <property type="term" value="P:meiotic joint molecule formation"/>
    <property type="evidence" value="ECO:0000304"/>
    <property type="project" value="PomBase"/>
</dbReference>
<dbReference type="GO" id="GO:0031573">
    <property type="term" value="P:mitotic intra-S DNA damage checkpoint signaling"/>
    <property type="evidence" value="ECO:0000315"/>
    <property type="project" value="PomBase"/>
</dbReference>
<dbReference type="GO" id="GO:0007131">
    <property type="term" value="P:reciprocal meiotic recombination"/>
    <property type="evidence" value="ECO:0000314"/>
    <property type="project" value="PomBase"/>
</dbReference>
<dbReference type="GO" id="GO:0031297">
    <property type="term" value="P:replication fork processing"/>
    <property type="evidence" value="ECO:0000315"/>
    <property type="project" value="PomBase"/>
</dbReference>
<dbReference type="GO" id="GO:0000712">
    <property type="term" value="P:resolution of meiotic recombination intermediates"/>
    <property type="evidence" value="ECO:0000314"/>
    <property type="project" value="PomBase"/>
</dbReference>
<dbReference type="CDD" id="cd20085">
    <property type="entry name" value="XPF_nuclease_Mms4"/>
    <property type="match status" value="1"/>
</dbReference>
<dbReference type="Gene3D" id="3.40.50.10130">
    <property type="match status" value="1"/>
</dbReference>
<dbReference type="Gene3D" id="1.10.150.670">
    <property type="entry name" value="Crossover junction endonuclease EME1, DNA-binding domain"/>
    <property type="match status" value="1"/>
</dbReference>
<dbReference type="InterPro" id="IPR042530">
    <property type="entry name" value="EME1/EME2_C"/>
</dbReference>
<dbReference type="InterPro" id="IPR006166">
    <property type="entry name" value="ERCC4_domain"/>
</dbReference>
<dbReference type="InterPro" id="IPR033310">
    <property type="entry name" value="Mms4/EME1/EME2"/>
</dbReference>
<dbReference type="InterPro" id="IPR047521">
    <property type="entry name" value="XPF_nuclease_EME1_ascomycetes"/>
</dbReference>
<dbReference type="PANTHER" id="PTHR21077:SF5">
    <property type="entry name" value="CROSSOVER JUNCTION ENDONUCLEASE MMS4"/>
    <property type="match status" value="1"/>
</dbReference>
<dbReference type="PANTHER" id="PTHR21077">
    <property type="entry name" value="EME1 PROTEIN"/>
    <property type="match status" value="1"/>
</dbReference>
<dbReference type="Pfam" id="PF02732">
    <property type="entry name" value="ERCC4"/>
    <property type="match status" value="1"/>
</dbReference>